<protein>
    <recommendedName>
        <fullName evidence="1">Uncharacterized methyltransferase BA_4603/GBAA_4603/BAS4271</fullName>
        <ecNumber evidence="1">2.1.1.-</ecNumber>
    </recommendedName>
</protein>
<dbReference type="EC" id="2.1.1.-" evidence="1"/>
<dbReference type="EMBL" id="AE016879">
    <property type="protein sequence ID" value="AAP28308.1"/>
    <property type="molecule type" value="Genomic_DNA"/>
</dbReference>
<dbReference type="EMBL" id="AE017334">
    <property type="protein sequence ID" value="AAT33724.1"/>
    <property type="molecule type" value="Genomic_DNA"/>
</dbReference>
<dbReference type="EMBL" id="AE017225">
    <property type="protein sequence ID" value="AAT56570.1"/>
    <property type="molecule type" value="Genomic_DNA"/>
</dbReference>
<dbReference type="RefSeq" id="NP_846822.1">
    <property type="nucleotide sequence ID" value="NC_003997.3"/>
</dbReference>
<dbReference type="RefSeq" id="WP_000536319.1">
    <property type="nucleotide sequence ID" value="NZ_WXXJ01000027.1"/>
</dbReference>
<dbReference type="RefSeq" id="YP_030519.1">
    <property type="nucleotide sequence ID" value="NC_005945.1"/>
</dbReference>
<dbReference type="SMR" id="Q81LL3"/>
<dbReference type="STRING" id="261594.GBAA_4603"/>
<dbReference type="DNASU" id="1088627"/>
<dbReference type="KEGG" id="ban:BA_4603"/>
<dbReference type="KEGG" id="bar:GBAA_4603"/>
<dbReference type="KEGG" id="bat:BAS4271"/>
<dbReference type="PATRIC" id="fig|198094.11.peg.4570"/>
<dbReference type="eggNOG" id="COG2226">
    <property type="taxonomic scope" value="Bacteria"/>
</dbReference>
<dbReference type="HOGENOM" id="CLU_111961_0_0_9"/>
<dbReference type="OMA" id="FVWIMEA"/>
<dbReference type="OrthoDB" id="465705at2"/>
<dbReference type="Proteomes" id="UP000000427">
    <property type="component" value="Chromosome"/>
</dbReference>
<dbReference type="Proteomes" id="UP000000594">
    <property type="component" value="Chromosome"/>
</dbReference>
<dbReference type="GO" id="GO:0008757">
    <property type="term" value="F:S-adenosylmethionine-dependent methyltransferase activity"/>
    <property type="evidence" value="ECO:0007669"/>
    <property type="project" value="UniProtKB-UniRule"/>
</dbReference>
<dbReference type="GO" id="GO:0032259">
    <property type="term" value="P:methylation"/>
    <property type="evidence" value="ECO:0007669"/>
    <property type="project" value="UniProtKB-KW"/>
</dbReference>
<dbReference type="CDD" id="cd02440">
    <property type="entry name" value="AdoMet_MTases"/>
    <property type="match status" value="1"/>
</dbReference>
<dbReference type="Gene3D" id="3.40.50.150">
    <property type="entry name" value="Vaccinia Virus protein VP39"/>
    <property type="match status" value="1"/>
</dbReference>
<dbReference type="HAMAP" id="MF_02100">
    <property type="entry name" value="Methyltr_YrrT"/>
    <property type="match status" value="1"/>
</dbReference>
<dbReference type="InterPro" id="IPR041698">
    <property type="entry name" value="Methyltransf_25"/>
</dbReference>
<dbReference type="InterPro" id="IPR029063">
    <property type="entry name" value="SAM-dependent_MTases_sf"/>
</dbReference>
<dbReference type="InterPro" id="IPR023553">
    <property type="entry name" value="Uncharacterised_MeTfrase_YrrT"/>
</dbReference>
<dbReference type="PANTHER" id="PTHR43861:SF1">
    <property type="entry name" value="TRANS-ACONITATE 2-METHYLTRANSFERASE"/>
    <property type="match status" value="1"/>
</dbReference>
<dbReference type="PANTHER" id="PTHR43861">
    <property type="entry name" value="TRANS-ACONITATE 2-METHYLTRANSFERASE-RELATED"/>
    <property type="match status" value="1"/>
</dbReference>
<dbReference type="Pfam" id="PF13649">
    <property type="entry name" value="Methyltransf_25"/>
    <property type="match status" value="1"/>
</dbReference>
<dbReference type="SUPFAM" id="SSF53335">
    <property type="entry name" value="S-adenosyl-L-methionine-dependent methyltransferases"/>
    <property type="match status" value="1"/>
</dbReference>
<sequence>MGTEFNGLFDEWAHTYDSFVQGEDIQYKEVFAHYEDILEDVVNKSFGNVLEFGVGTGNLTNKLLLAGRTVYGIEPSREMRMIAKEKLPKEFSITEGDFLSFEVPNSIDTIVSTYAFHHLTDDEKNVAIAKYSQLLNKGGKIVFADTIFADQDAYDKTVEAAKQRGFHQLANDLQTEYYTRIPVMQTIFENNGFHVTFTRLNHFVWVMEATKQ</sequence>
<name>Y4603_BACAN</name>
<feature type="chain" id="PRO_0000373841" description="Uncharacterized methyltransferase BA_4603/GBAA_4603/BAS4271">
    <location>
        <begin position="1"/>
        <end position="212"/>
    </location>
</feature>
<feature type="binding site" evidence="1">
    <location>
        <position position="53"/>
    </location>
    <ligand>
        <name>S-adenosyl-L-methionine</name>
        <dbReference type="ChEBI" id="CHEBI:59789"/>
    </ligand>
</feature>
<feature type="binding site" evidence="1">
    <location>
        <position position="74"/>
    </location>
    <ligand>
        <name>S-adenosyl-L-methionine</name>
        <dbReference type="ChEBI" id="CHEBI:59789"/>
    </ligand>
</feature>
<feature type="binding site" evidence="1">
    <location>
        <position position="97"/>
    </location>
    <ligand>
        <name>S-adenosyl-L-methionine</name>
        <dbReference type="ChEBI" id="CHEBI:59789"/>
    </ligand>
</feature>
<evidence type="ECO:0000255" key="1">
    <source>
        <dbReference type="HAMAP-Rule" id="MF_02100"/>
    </source>
</evidence>
<accession>Q81LL3</accession>
<accession>Q6HT19</accession>
<accession>Q6KMA8</accession>
<comment type="function">
    <text evidence="1">Could be a S-adenosyl-L-methionine-dependent methyltransferase.</text>
</comment>
<comment type="similarity">
    <text evidence="1">Belongs to the methyltransferase superfamily. YrrT family.</text>
</comment>
<gene>
    <name type="ordered locus">BA_4603</name>
    <name type="ordered locus">GBAA_4603</name>
    <name type="ordered locus">BAS4271</name>
</gene>
<reference key="1">
    <citation type="journal article" date="2003" name="Nature">
        <title>The genome sequence of Bacillus anthracis Ames and comparison to closely related bacteria.</title>
        <authorList>
            <person name="Read T.D."/>
            <person name="Peterson S.N."/>
            <person name="Tourasse N.J."/>
            <person name="Baillie L.W."/>
            <person name="Paulsen I.T."/>
            <person name="Nelson K.E."/>
            <person name="Tettelin H."/>
            <person name="Fouts D.E."/>
            <person name="Eisen J.A."/>
            <person name="Gill S.R."/>
            <person name="Holtzapple E.K."/>
            <person name="Okstad O.A."/>
            <person name="Helgason E."/>
            <person name="Rilstone J."/>
            <person name="Wu M."/>
            <person name="Kolonay J.F."/>
            <person name="Beanan M.J."/>
            <person name="Dodson R.J."/>
            <person name="Brinkac L.M."/>
            <person name="Gwinn M.L."/>
            <person name="DeBoy R.T."/>
            <person name="Madpu R."/>
            <person name="Daugherty S.C."/>
            <person name="Durkin A.S."/>
            <person name="Haft D.H."/>
            <person name="Nelson W.C."/>
            <person name="Peterson J.D."/>
            <person name="Pop M."/>
            <person name="Khouri H.M."/>
            <person name="Radune D."/>
            <person name="Benton J.L."/>
            <person name="Mahamoud Y."/>
            <person name="Jiang L."/>
            <person name="Hance I.R."/>
            <person name="Weidman J.F."/>
            <person name="Berry K.J."/>
            <person name="Plaut R.D."/>
            <person name="Wolf A.M."/>
            <person name="Watkins K.L."/>
            <person name="Nierman W.C."/>
            <person name="Hazen A."/>
            <person name="Cline R.T."/>
            <person name="Redmond C."/>
            <person name="Thwaite J.E."/>
            <person name="White O."/>
            <person name="Salzberg S.L."/>
            <person name="Thomason B."/>
            <person name="Friedlander A.M."/>
            <person name="Koehler T.M."/>
            <person name="Hanna P.C."/>
            <person name="Kolstoe A.-B."/>
            <person name="Fraser C.M."/>
        </authorList>
    </citation>
    <scope>NUCLEOTIDE SEQUENCE [LARGE SCALE GENOMIC DNA]</scope>
    <source>
        <strain>Ames / isolate Porton</strain>
    </source>
</reference>
<reference key="2">
    <citation type="submission" date="2004-01" db="EMBL/GenBank/DDBJ databases">
        <title>Complete genome sequence of Bacillus anthracis Sterne.</title>
        <authorList>
            <person name="Brettin T.S."/>
            <person name="Bruce D."/>
            <person name="Challacombe J.F."/>
            <person name="Gilna P."/>
            <person name="Han C."/>
            <person name="Hill K."/>
            <person name="Hitchcock P."/>
            <person name="Jackson P."/>
            <person name="Keim P."/>
            <person name="Longmire J."/>
            <person name="Lucas S."/>
            <person name="Okinaka R."/>
            <person name="Richardson P."/>
            <person name="Rubin E."/>
            <person name="Tice H."/>
        </authorList>
    </citation>
    <scope>NUCLEOTIDE SEQUENCE [LARGE SCALE GENOMIC DNA]</scope>
    <source>
        <strain>Sterne</strain>
    </source>
</reference>
<reference key="3">
    <citation type="journal article" date="2009" name="J. Bacteriol.">
        <title>The complete genome sequence of Bacillus anthracis Ames 'Ancestor'.</title>
        <authorList>
            <person name="Ravel J."/>
            <person name="Jiang L."/>
            <person name="Stanley S.T."/>
            <person name="Wilson M.R."/>
            <person name="Decker R.S."/>
            <person name="Read T.D."/>
            <person name="Worsham P."/>
            <person name="Keim P.S."/>
            <person name="Salzberg S.L."/>
            <person name="Fraser-Liggett C.M."/>
            <person name="Rasko D.A."/>
        </authorList>
    </citation>
    <scope>NUCLEOTIDE SEQUENCE [LARGE SCALE GENOMIC DNA]</scope>
    <source>
        <strain>Ames ancestor</strain>
    </source>
</reference>
<proteinExistence type="inferred from homology"/>
<organism>
    <name type="scientific">Bacillus anthracis</name>
    <dbReference type="NCBI Taxonomy" id="1392"/>
    <lineage>
        <taxon>Bacteria</taxon>
        <taxon>Bacillati</taxon>
        <taxon>Bacillota</taxon>
        <taxon>Bacilli</taxon>
        <taxon>Bacillales</taxon>
        <taxon>Bacillaceae</taxon>
        <taxon>Bacillus</taxon>
        <taxon>Bacillus cereus group</taxon>
    </lineage>
</organism>
<keyword id="KW-0489">Methyltransferase</keyword>
<keyword id="KW-1185">Reference proteome</keyword>
<keyword id="KW-0949">S-adenosyl-L-methionine</keyword>
<keyword id="KW-0808">Transferase</keyword>